<evidence type="ECO:0000255" key="1">
    <source>
        <dbReference type="HAMAP-Rule" id="MF_04001"/>
    </source>
</evidence>
<evidence type="ECO:0000256" key="2">
    <source>
        <dbReference type="SAM" id="MobiDB-lite"/>
    </source>
</evidence>
<protein>
    <recommendedName>
        <fullName evidence="1">Regulatory protein E2</fullName>
    </recommendedName>
</protein>
<dbReference type="EMBL" id="X74478">
    <property type="protein sequence ID" value="CAA52570.1"/>
    <property type="molecule type" value="Genomic_DNA"/>
</dbReference>
<dbReference type="PIR" id="S36558">
    <property type="entry name" value="S36558"/>
</dbReference>
<dbReference type="SMR" id="P36793"/>
<dbReference type="Proteomes" id="UP000009121">
    <property type="component" value="Genome"/>
</dbReference>
<dbReference type="GO" id="GO:0042025">
    <property type="term" value="C:host cell nucleus"/>
    <property type="evidence" value="ECO:0007669"/>
    <property type="project" value="UniProtKB-SubCell"/>
</dbReference>
<dbReference type="GO" id="GO:0003677">
    <property type="term" value="F:DNA binding"/>
    <property type="evidence" value="ECO:0007669"/>
    <property type="project" value="UniProtKB-UniRule"/>
</dbReference>
<dbReference type="GO" id="GO:0003700">
    <property type="term" value="F:DNA-binding transcription factor activity"/>
    <property type="evidence" value="ECO:0007669"/>
    <property type="project" value="UniProtKB-UniRule"/>
</dbReference>
<dbReference type="GO" id="GO:0000166">
    <property type="term" value="F:nucleotide binding"/>
    <property type="evidence" value="ECO:0007669"/>
    <property type="project" value="UniProtKB-UniRule"/>
</dbReference>
<dbReference type="GO" id="GO:0006260">
    <property type="term" value="P:DNA replication"/>
    <property type="evidence" value="ECO:0007669"/>
    <property type="project" value="UniProtKB-KW"/>
</dbReference>
<dbReference type="GO" id="GO:0006351">
    <property type="term" value="P:DNA-templated transcription"/>
    <property type="evidence" value="ECO:0007669"/>
    <property type="project" value="UniProtKB-UniRule"/>
</dbReference>
<dbReference type="GO" id="GO:0006275">
    <property type="term" value="P:regulation of DNA replication"/>
    <property type="evidence" value="ECO:0007669"/>
    <property type="project" value="UniProtKB-UniRule"/>
</dbReference>
<dbReference type="GO" id="GO:0039693">
    <property type="term" value="P:viral DNA genome replication"/>
    <property type="evidence" value="ECO:0007669"/>
    <property type="project" value="UniProtKB-UniRule"/>
</dbReference>
<dbReference type="Gene3D" id="3.30.70.330">
    <property type="match status" value="1"/>
</dbReference>
<dbReference type="Gene3D" id="1.10.287.30">
    <property type="entry name" value="E2 (early) protein, N terminal domain, subdomain 1"/>
    <property type="match status" value="1"/>
</dbReference>
<dbReference type="Gene3D" id="2.170.200.10">
    <property type="entry name" value="Papillomavirus E2 early protein domain"/>
    <property type="match status" value="1"/>
</dbReference>
<dbReference type="HAMAP" id="MF_04001">
    <property type="entry name" value="PPV_E2"/>
    <property type="match status" value="1"/>
</dbReference>
<dbReference type="InterPro" id="IPR035975">
    <property type="entry name" value="E2/EBNA1_C_sf"/>
</dbReference>
<dbReference type="InterPro" id="IPR012677">
    <property type="entry name" value="Nucleotide-bd_a/b_plait_sf"/>
</dbReference>
<dbReference type="InterPro" id="IPR000427">
    <property type="entry name" value="Papillomavirus_E2_C"/>
</dbReference>
<dbReference type="InterPro" id="IPR001866">
    <property type="entry name" value="PPV_E2_N"/>
</dbReference>
<dbReference type="InterPro" id="IPR033668">
    <property type="entry name" value="Reg_prot_E2"/>
</dbReference>
<dbReference type="InterPro" id="IPR036050">
    <property type="entry name" value="Regulatory_protein_E2_N"/>
</dbReference>
<dbReference type="InterPro" id="IPR042503">
    <property type="entry name" value="Regulatory_protein_E2_N_1"/>
</dbReference>
<dbReference type="InterPro" id="IPR042504">
    <property type="entry name" value="Regulatory_protein_E2_N_2"/>
</dbReference>
<dbReference type="Pfam" id="PF00511">
    <property type="entry name" value="PPV_E2_C"/>
    <property type="match status" value="1"/>
</dbReference>
<dbReference type="Pfam" id="PF00508">
    <property type="entry name" value="PPV_E2_N"/>
    <property type="match status" value="1"/>
</dbReference>
<dbReference type="SUPFAM" id="SSF51332">
    <property type="entry name" value="E2 regulatory, transactivation domain"/>
    <property type="match status" value="1"/>
</dbReference>
<dbReference type="SUPFAM" id="SSF54957">
    <property type="entry name" value="Viral DNA-binding domain"/>
    <property type="match status" value="1"/>
</dbReference>
<proteinExistence type="inferred from homology"/>
<feature type="chain" id="PRO_0000133220" description="Regulatory protein E2">
    <location>
        <begin position="1"/>
        <end position="370"/>
    </location>
</feature>
<feature type="region of interest" description="Transactivation domain" evidence="1">
    <location>
        <begin position="1"/>
        <end position="200"/>
    </location>
</feature>
<feature type="region of interest" description="Disordered" evidence="2">
    <location>
        <begin position="212"/>
        <end position="255"/>
    </location>
</feature>
<feature type="region of interest" description="Disordered" evidence="2">
    <location>
        <begin position="268"/>
        <end position="287"/>
    </location>
</feature>
<feature type="region of interest" description="DNA-binding domain" evidence="1">
    <location>
        <begin position="289"/>
        <end position="370"/>
    </location>
</feature>
<feature type="compositionally biased region" description="Low complexity" evidence="2">
    <location>
        <begin position="212"/>
        <end position="230"/>
    </location>
</feature>
<reference key="1">
    <citation type="journal article" date="1994" name="Curr. Top. Microbiol. Immunol.">
        <title>Primer-directed sequencing of human papillomavirus types.</title>
        <authorList>
            <person name="Delius H."/>
            <person name="Hofmann B."/>
        </authorList>
    </citation>
    <scope>NUCLEOTIDE SEQUENCE [GENOMIC DNA]</scope>
</reference>
<organism>
    <name type="scientific">Human papillomavirus 40</name>
    <dbReference type="NCBI Taxonomy" id="10615"/>
    <lineage>
        <taxon>Viruses</taxon>
        <taxon>Monodnaviria</taxon>
        <taxon>Shotokuvirae</taxon>
        <taxon>Cossaviricota</taxon>
        <taxon>Papovaviricetes</taxon>
        <taxon>Zurhausenvirales</taxon>
        <taxon>Papillomaviridae</taxon>
        <taxon>Firstpapillomavirinae</taxon>
        <taxon>Alphapapillomavirus</taxon>
        <taxon>Alphapapillomavirus 8</taxon>
    </lineage>
</organism>
<accession>P36793</accession>
<comment type="function">
    <text evidence="1">Plays a role in the initiation of viral DNA replication. A dimer of E2 interacts with a dimer of E1 in order to improve specificity of E1 DNA binding activity. Once the complex recognizes and binds DNA at specific sites, the E2 dimer is removed from DNA. E2 also regulates viral transcription through binding to the E2RE response element (5'-ACCNNNNNNGGT-3') present in multiple copies in the regulatory regions of the viral genome. Activates or represses transcription depending on E2RE's position with regards to proximal promoter elements including the TATA-box. Repression occurs by sterically hindering the assembly of the transcription initiation complex.</text>
</comment>
<comment type="subunit">
    <text evidence="1">Binds DNA as homodimer. Interacts with protein E1; this interaction greatly increases E1 DNA-binding activity. Interacts with protein L1; this interaction enhances E2-dependent replication and transcription activation. Interacts with protein L2; this interaction inhibits E2 transcriptional activity but not DNA replication function E2. Interacts with protein E7; this interaction inhibits E7 oncogenic activity. Interacts with host TAF1; this interaction modulates E2-dependent transcriptional regulation. Interacts with host BRD4; this interaction mediates E2 transcriptional activation function. Additionally, the interaction with host BRD4 on mitotic chromosomes mediates tethering of the viral genome. Interacts with host TOPBP1; this interaction is required for optimal viral DNA replication.</text>
</comment>
<comment type="subcellular location">
    <subcellularLocation>
        <location evidence="1">Host nucleus</location>
    </subcellularLocation>
</comment>
<comment type="PTM">
    <text evidence="1">Phosphorylated.</text>
</comment>
<comment type="similarity">
    <text evidence="1">Belongs to the papillomaviridae E2 protein family.</text>
</comment>
<sequence>MENLARRLDLCQEQLLELYEQNSKELQQHILHWKYIRYESAIYYTARQMGIKHLGHQVVPSLDVSKAKAHAAIEMQMCLESLQNTEYNVEPWTLQDTSQELWLAEPKKCFKKGGKTVEVRFDCNETNAMHYTLWTTVYVQVDDAWTKVKGQVDYKGLSYTVHGCTTYYVDFAKEAQTYGKTNRWTVIVGSHVICSPSTIEEHGLPIVETADARPPTTATDTPDAPATATTETVGPAQAPPRKRRRNGHLPITTTVGKSLGGEYVDTADRTRTPDPESNNGHRNCGGGSSTPIIQLEGEANCLKCFRYRLGKVSHLFCNSSTTWRWTTESRTEKNAIITLTYSSVQQRSDFLAIVKIPKTIKHSLGMLTLM</sequence>
<keyword id="KW-0010">Activator</keyword>
<keyword id="KW-0235">DNA replication</keyword>
<keyword id="KW-0238">DNA-binding</keyword>
<keyword id="KW-0244">Early protein</keyword>
<keyword id="KW-1048">Host nucleus</keyword>
<keyword id="KW-0597">Phosphoprotein</keyword>
<keyword id="KW-0678">Repressor</keyword>
<keyword id="KW-0804">Transcription</keyword>
<keyword id="KW-0805">Transcription regulation</keyword>
<organismHost>
    <name type="scientific">Homo sapiens</name>
    <name type="common">Human</name>
    <dbReference type="NCBI Taxonomy" id="9606"/>
</organismHost>
<gene>
    <name evidence="1" type="primary">E2</name>
</gene>
<name>VE2_HPV40</name>